<sequence>MTSIVFMGTPAFAAPILESLIKEQYQVLGVVTQPDRKVGRKHVLTASPVKEVAVAHDIPVFQPEKISGSPEMQQIIDLQPDLIVTAAFGQFLPTKLLKAAKIGAVNVHGSLLPKYRGGAPVQYSIINGESETGITIIYMVKKMDAGDMLAQRAIPIEKNDDTGTMFDKLSLVGRDLLLETLPKLIAGEITAVPQDESQVTFAPNIQPEQEVLDFFTKTAVEIDNQVRGMRPAPIAYAVLDGKRTKFWDVTPLADEVVTQAPGQVVRKTKHELVIAAADHTAIAINQLQPAGKPKMTITDYLNGAADKFATGEQVINK</sequence>
<keyword id="KW-0648">Protein biosynthesis</keyword>
<keyword id="KW-1185">Reference proteome</keyword>
<keyword id="KW-0808">Transferase</keyword>
<name>FMT_LACPL</name>
<accession>Q88WL3</accession>
<accession>F9UNZ0</accession>
<protein>
    <recommendedName>
        <fullName evidence="1">Methionyl-tRNA formyltransferase</fullName>
        <ecNumber evidence="1">2.1.2.9</ecNumber>
    </recommendedName>
</protein>
<reference key="1">
    <citation type="journal article" date="2003" name="Proc. Natl. Acad. Sci. U.S.A.">
        <title>Complete genome sequence of Lactobacillus plantarum WCFS1.</title>
        <authorList>
            <person name="Kleerebezem M."/>
            <person name="Boekhorst J."/>
            <person name="van Kranenburg R."/>
            <person name="Molenaar D."/>
            <person name="Kuipers O.P."/>
            <person name="Leer R."/>
            <person name="Tarchini R."/>
            <person name="Peters S.A."/>
            <person name="Sandbrink H.M."/>
            <person name="Fiers M.W.E.J."/>
            <person name="Stiekema W."/>
            <person name="Klein Lankhorst R.M."/>
            <person name="Bron P.A."/>
            <person name="Hoffer S.M."/>
            <person name="Nierop Groot M.N."/>
            <person name="Kerkhoven R."/>
            <person name="De Vries M."/>
            <person name="Ursing B."/>
            <person name="De Vos W.M."/>
            <person name="Siezen R.J."/>
        </authorList>
    </citation>
    <scope>NUCLEOTIDE SEQUENCE [LARGE SCALE GENOMIC DNA]</scope>
    <source>
        <strain>ATCC BAA-793 / NCIMB 8826 / WCFS1</strain>
    </source>
</reference>
<reference key="2">
    <citation type="journal article" date="2012" name="J. Bacteriol.">
        <title>Complete resequencing and reannotation of the Lactobacillus plantarum WCFS1 genome.</title>
        <authorList>
            <person name="Siezen R.J."/>
            <person name="Francke C."/>
            <person name="Renckens B."/>
            <person name="Boekhorst J."/>
            <person name="Wels M."/>
            <person name="Kleerebezem M."/>
            <person name="van Hijum S.A."/>
        </authorList>
    </citation>
    <scope>NUCLEOTIDE SEQUENCE [LARGE SCALE GENOMIC DNA]</scope>
    <scope>GENOME REANNOTATION</scope>
    <source>
        <strain>ATCC BAA-793 / NCIMB 8826 / WCFS1</strain>
    </source>
</reference>
<proteinExistence type="inferred from homology"/>
<feature type="chain" id="PRO_0000082980" description="Methionyl-tRNA formyltransferase">
    <location>
        <begin position="1"/>
        <end position="317"/>
    </location>
</feature>
<feature type="binding site" evidence="1">
    <location>
        <begin position="110"/>
        <end position="113"/>
    </location>
    <ligand>
        <name>(6S)-5,6,7,8-tetrahydrofolate</name>
        <dbReference type="ChEBI" id="CHEBI:57453"/>
    </ligand>
</feature>
<evidence type="ECO:0000255" key="1">
    <source>
        <dbReference type="HAMAP-Rule" id="MF_00182"/>
    </source>
</evidence>
<organism>
    <name type="scientific">Lactiplantibacillus plantarum (strain ATCC BAA-793 / NCIMB 8826 / WCFS1)</name>
    <name type="common">Lactobacillus plantarum</name>
    <dbReference type="NCBI Taxonomy" id="220668"/>
    <lineage>
        <taxon>Bacteria</taxon>
        <taxon>Bacillati</taxon>
        <taxon>Bacillota</taxon>
        <taxon>Bacilli</taxon>
        <taxon>Lactobacillales</taxon>
        <taxon>Lactobacillaceae</taxon>
        <taxon>Lactiplantibacillus</taxon>
    </lineage>
</organism>
<gene>
    <name evidence="1" type="primary">fmt</name>
    <name type="ordered locus">lp_1616</name>
</gene>
<dbReference type="EC" id="2.1.2.9" evidence="1"/>
<dbReference type="EMBL" id="AL935263">
    <property type="protein sequence ID" value="CCC78929.1"/>
    <property type="molecule type" value="Genomic_DNA"/>
</dbReference>
<dbReference type="RefSeq" id="WP_011101475.1">
    <property type="nucleotide sequence ID" value="NC_004567.2"/>
</dbReference>
<dbReference type="RefSeq" id="YP_004889443.1">
    <property type="nucleotide sequence ID" value="NC_004567.2"/>
</dbReference>
<dbReference type="SMR" id="Q88WL3"/>
<dbReference type="STRING" id="220668.lp_1616"/>
<dbReference type="EnsemblBacteria" id="CCC78929">
    <property type="protein sequence ID" value="CCC78929"/>
    <property type="gene ID" value="lp_1616"/>
</dbReference>
<dbReference type="KEGG" id="lpl:lp_1616"/>
<dbReference type="PATRIC" id="fig|220668.9.peg.1364"/>
<dbReference type="eggNOG" id="COG0223">
    <property type="taxonomic scope" value="Bacteria"/>
</dbReference>
<dbReference type="HOGENOM" id="CLU_033347_1_1_9"/>
<dbReference type="OrthoDB" id="9802815at2"/>
<dbReference type="PhylomeDB" id="Q88WL3"/>
<dbReference type="Proteomes" id="UP000000432">
    <property type="component" value="Chromosome"/>
</dbReference>
<dbReference type="GO" id="GO:0005829">
    <property type="term" value="C:cytosol"/>
    <property type="evidence" value="ECO:0007669"/>
    <property type="project" value="TreeGrafter"/>
</dbReference>
<dbReference type="GO" id="GO:0004479">
    <property type="term" value="F:methionyl-tRNA formyltransferase activity"/>
    <property type="evidence" value="ECO:0007669"/>
    <property type="project" value="UniProtKB-UniRule"/>
</dbReference>
<dbReference type="CDD" id="cd08646">
    <property type="entry name" value="FMT_core_Met-tRNA-FMT_N"/>
    <property type="match status" value="1"/>
</dbReference>
<dbReference type="CDD" id="cd08704">
    <property type="entry name" value="Met_tRNA_FMT_C"/>
    <property type="match status" value="1"/>
</dbReference>
<dbReference type="FunFam" id="3.40.50.170:FF:000004">
    <property type="entry name" value="Methionyl-tRNA formyltransferase"/>
    <property type="match status" value="1"/>
</dbReference>
<dbReference type="Gene3D" id="3.10.25.10">
    <property type="entry name" value="Formyl transferase, C-terminal domain"/>
    <property type="match status" value="1"/>
</dbReference>
<dbReference type="Gene3D" id="3.40.50.170">
    <property type="entry name" value="Formyl transferase, N-terminal domain"/>
    <property type="match status" value="1"/>
</dbReference>
<dbReference type="HAMAP" id="MF_00182">
    <property type="entry name" value="Formyl_trans"/>
    <property type="match status" value="1"/>
</dbReference>
<dbReference type="InterPro" id="IPR005794">
    <property type="entry name" value="Fmt"/>
</dbReference>
<dbReference type="InterPro" id="IPR005793">
    <property type="entry name" value="Formyl_trans_C"/>
</dbReference>
<dbReference type="InterPro" id="IPR037022">
    <property type="entry name" value="Formyl_trans_C_sf"/>
</dbReference>
<dbReference type="InterPro" id="IPR002376">
    <property type="entry name" value="Formyl_transf_N"/>
</dbReference>
<dbReference type="InterPro" id="IPR036477">
    <property type="entry name" value="Formyl_transf_N_sf"/>
</dbReference>
<dbReference type="InterPro" id="IPR011034">
    <property type="entry name" value="Formyl_transferase-like_C_sf"/>
</dbReference>
<dbReference type="InterPro" id="IPR001555">
    <property type="entry name" value="GART_AS"/>
</dbReference>
<dbReference type="InterPro" id="IPR044135">
    <property type="entry name" value="Met-tRNA-FMT_C"/>
</dbReference>
<dbReference type="InterPro" id="IPR041711">
    <property type="entry name" value="Met-tRNA-FMT_N"/>
</dbReference>
<dbReference type="NCBIfam" id="TIGR00460">
    <property type="entry name" value="fmt"/>
    <property type="match status" value="1"/>
</dbReference>
<dbReference type="PANTHER" id="PTHR11138">
    <property type="entry name" value="METHIONYL-TRNA FORMYLTRANSFERASE"/>
    <property type="match status" value="1"/>
</dbReference>
<dbReference type="PANTHER" id="PTHR11138:SF5">
    <property type="entry name" value="METHIONYL-TRNA FORMYLTRANSFERASE, MITOCHONDRIAL"/>
    <property type="match status" value="1"/>
</dbReference>
<dbReference type="Pfam" id="PF02911">
    <property type="entry name" value="Formyl_trans_C"/>
    <property type="match status" value="1"/>
</dbReference>
<dbReference type="Pfam" id="PF00551">
    <property type="entry name" value="Formyl_trans_N"/>
    <property type="match status" value="1"/>
</dbReference>
<dbReference type="SUPFAM" id="SSF50486">
    <property type="entry name" value="FMT C-terminal domain-like"/>
    <property type="match status" value="1"/>
</dbReference>
<dbReference type="SUPFAM" id="SSF53328">
    <property type="entry name" value="Formyltransferase"/>
    <property type="match status" value="1"/>
</dbReference>
<dbReference type="PROSITE" id="PS00373">
    <property type="entry name" value="GART"/>
    <property type="match status" value="1"/>
</dbReference>
<comment type="function">
    <text evidence="1">Attaches a formyl group to the free amino group of methionyl-tRNA(fMet). The formyl group appears to play a dual role in the initiator identity of N-formylmethionyl-tRNA by promoting its recognition by IF2 and preventing the misappropriation of this tRNA by the elongation apparatus.</text>
</comment>
<comment type="catalytic activity">
    <reaction evidence="1">
        <text>L-methionyl-tRNA(fMet) + (6R)-10-formyltetrahydrofolate = N-formyl-L-methionyl-tRNA(fMet) + (6S)-5,6,7,8-tetrahydrofolate + H(+)</text>
        <dbReference type="Rhea" id="RHEA:24380"/>
        <dbReference type="Rhea" id="RHEA-COMP:9952"/>
        <dbReference type="Rhea" id="RHEA-COMP:9953"/>
        <dbReference type="ChEBI" id="CHEBI:15378"/>
        <dbReference type="ChEBI" id="CHEBI:57453"/>
        <dbReference type="ChEBI" id="CHEBI:78530"/>
        <dbReference type="ChEBI" id="CHEBI:78844"/>
        <dbReference type="ChEBI" id="CHEBI:195366"/>
        <dbReference type="EC" id="2.1.2.9"/>
    </reaction>
</comment>
<comment type="similarity">
    <text evidence="1">Belongs to the Fmt family.</text>
</comment>